<comment type="similarity">
    <text evidence="1">Belongs to the bacterial ribosomal protein bL27 family.</text>
</comment>
<name>RL27_OPITP</name>
<accession>B1ZZL7</accession>
<proteinExistence type="inferred from homology"/>
<reference key="1">
    <citation type="journal article" date="2011" name="J. Bacteriol.">
        <title>Genome sequence of the verrucomicrobium Opitutus terrae PB90-1, an abundant inhabitant of rice paddy soil ecosystems.</title>
        <authorList>
            <person name="van Passel M.W."/>
            <person name="Kant R."/>
            <person name="Palva A."/>
            <person name="Copeland A."/>
            <person name="Lucas S."/>
            <person name="Lapidus A."/>
            <person name="Glavina del Rio T."/>
            <person name="Pitluck S."/>
            <person name="Goltsman E."/>
            <person name="Clum A."/>
            <person name="Sun H."/>
            <person name="Schmutz J."/>
            <person name="Larimer F.W."/>
            <person name="Land M.L."/>
            <person name="Hauser L."/>
            <person name="Kyrpides N."/>
            <person name="Mikhailova N."/>
            <person name="Richardson P.P."/>
            <person name="Janssen P.H."/>
            <person name="de Vos W.M."/>
            <person name="Smidt H."/>
        </authorList>
    </citation>
    <scope>NUCLEOTIDE SEQUENCE [LARGE SCALE GENOMIC DNA]</scope>
    <source>
        <strain>DSM 11246 / JCM 15787 / PB90-1</strain>
    </source>
</reference>
<dbReference type="EMBL" id="CP001032">
    <property type="protein sequence ID" value="ACB76420.1"/>
    <property type="molecule type" value="Genomic_DNA"/>
</dbReference>
<dbReference type="RefSeq" id="WP_012375949.1">
    <property type="nucleotide sequence ID" value="NC_010571.1"/>
</dbReference>
<dbReference type="SMR" id="B1ZZL7"/>
<dbReference type="STRING" id="452637.Oter_3140"/>
<dbReference type="KEGG" id="ote:Oter_3140"/>
<dbReference type="eggNOG" id="COG0211">
    <property type="taxonomic scope" value="Bacteria"/>
</dbReference>
<dbReference type="HOGENOM" id="CLU_095424_4_0_0"/>
<dbReference type="OrthoDB" id="9803474at2"/>
<dbReference type="Proteomes" id="UP000007013">
    <property type="component" value="Chromosome"/>
</dbReference>
<dbReference type="GO" id="GO:0022625">
    <property type="term" value="C:cytosolic large ribosomal subunit"/>
    <property type="evidence" value="ECO:0007669"/>
    <property type="project" value="TreeGrafter"/>
</dbReference>
<dbReference type="GO" id="GO:0003735">
    <property type="term" value="F:structural constituent of ribosome"/>
    <property type="evidence" value="ECO:0007669"/>
    <property type="project" value="InterPro"/>
</dbReference>
<dbReference type="GO" id="GO:0006412">
    <property type="term" value="P:translation"/>
    <property type="evidence" value="ECO:0007669"/>
    <property type="project" value="UniProtKB-UniRule"/>
</dbReference>
<dbReference type="FunFam" id="2.40.50.100:FF:000020">
    <property type="entry name" value="50S ribosomal protein L27"/>
    <property type="match status" value="1"/>
</dbReference>
<dbReference type="Gene3D" id="2.40.50.100">
    <property type="match status" value="1"/>
</dbReference>
<dbReference type="HAMAP" id="MF_00539">
    <property type="entry name" value="Ribosomal_bL27"/>
    <property type="match status" value="1"/>
</dbReference>
<dbReference type="InterPro" id="IPR001684">
    <property type="entry name" value="Ribosomal_bL27"/>
</dbReference>
<dbReference type="InterPro" id="IPR018261">
    <property type="entry name" value="Ribosomal_bL27_CS"/>
</dbReference>
<dbReference type="NCBIfam" id="TIGR00062">
    <property type="entry name" value="L27"/>
    <property type="match status" value="1"/>
</dbReference>
<dbReference type="PANTHER" id="PTHR15893:SF0">
    <property type="entry name" value="LARGE RIBOSOMAL SUBUNIT PROTEIN BL27M"/>
    <property type="match status" value="1"/>
</dbReference>
<dbReference type="PANTHER" id="PTHR15893">
    <property type="entry name" value="RIBOSOMAL PROTEIN L27"/>
    <property type="match status" value="1"/>
</dbReference>
<dbReference type="Pfam" id="PF01016">
    <property type="entry name" value="Ribosomal_L27"/>
    <property type="match status" value="1"/>
</dbReference>
<dbReference type="PRINTS" id="PR00063">
    <property type="entry name" value="RIBOSOMALL27"/>
</dbReference>
<dbReference type="SUPFAM" id="SSF110324">
    <property type="entry name" value="Ribosomal L27 protein-like"/>
    <property type="match status" value="1"/>
</dbReference>
<dbReference type="PROSITE" id="PS00831">
    <property type="entry name" value="RIBOSOMAL_L27"/>
    <property type="match status" value="1"/>
</dbReference>
<protein>
    <recommendedName>
        <fullName evidence="1">Large ribosomal subunit protein bL27</fullName>
    </recommendedName>
    <alternativeName>
        <fullName evidence="3">50S ribosomal protein L27</fullName>
    </alternativeName>
</protein>
<keyword id="KW-1185">Reference proteome</keyword>
<keyword id="KW-0687">Ribonucleoprotein</keyword>
<keyword id="KW-0689">Ribosomal protein</keyword>
<evidence type="ECO:0000255" key="1">
    <source>
        <dbReference type="HAMAP-Rule" id="MF_00539"/>
    </source>
</evidence>
<evidence type="ECO:0000256" key="2">
    <source>
        <dbReference type="SAM" id="MobiDB-lite"/>
    </source>
</evidence>
<evidence type="ECO:0000305" key="3"/>
<feature type="chain" id="PRO_1000128782" description="Large ribosomal subunit protein bL27">
    <location>
        <begin position="1"/>
        <end position="81"/>
    </location>
</feature>
<feature type="region of interest" description="Disordered" evidence="2">
    <location>
        <begin position="1"/>
        <end position="22"/>
    </location>
</feature>
<sequence length="81" mass="8844">MAHKTGQSSSSNGRESKSKRLGVKTFGGQKVLAGTIIIRQRGTRLHAGRNVGTGRDWTLFALKDGVVKFDKPHRRVEIVAS</sequence>
<gene>
    <name evidence="1" type="primary">rpmA</name>
    <name type="ordered locus">Oter_3140</name>
</gene>
<organism>
    <name type="scientific">Opitutus terrae (strain DSM 11246 / JCM 15787 / PB90-1)</name>
    <dbReference type="NCBI Taxonomy" id="452637"/>
    <lineage>
        <taxon>Bacteria</taxon>
        <taxon>Pseudomonadati</taxon>
        <taxon>Verrucomicrobiota</taxon>
        <taxon>Opitutia</taxon>
        <taxon>Opitutales</taxon>
        <taxon>Opitutaceae</taxon>
        <taxon>Opitutus</taxon>
    </lineage>
</organism>